<organism>
    <name type="scientific">Prochlorococcus marinus (strain NATL1A)</name>
    <dbReference type="NCBI Taxonomy" id="167555"/>
    <lineage>
        <taxon>Bacteria</taxon>
        <taxon>Bacillati</taxon>
        <taxon>Cyanobacteriota</taxon>
        <taxon>Cyanophyceae</taxon>
        <taxon>Synechococcales</taxon>
        <taxon>Prochlorococcaceae</taxon>
        <taxon>Prochlorococcus</taxon>
    </lineage>
</organism>
<gene>
    <name evidence="1" type="primary">rpsS</name>
    <name evidence="1" type="synonym">rps19</name>
    <name type="ordered locus">NATL1_19991</name>
</gene>
<evidence type="ECO:0000255" key="1">
    <source>
        <dbReference type="HAMAP-Rule" id="MF_00531"/>
    </source>
</evidence>
<evidence type="ECO:0000305" key="2"/>
<dbReference type="EMBL" id="CP000553">
    <property type="protein sequence ID" value="ABM76555.1"/>
    <property type="molecule type" value="Genomic_DNA"/>
</dbReference>
<dbReference type="RefSeq" id="WP_011295469.1">
    <property type="nucleotide sequence ID" value="NC_008819.1"/>
</dbReference>
<dbReference type="SMR" id="A2C4Z5"/>
<dbReference type="KEGG" id="pme:NATL1_19991"/>
<dbReference type="eggNOG" id="COG0185">
    <property type="taxonomic scope" value="Bacteria"/>
</dbReference>
<dbReference type="HOGENOM" id="CLU_144911_0_1_3"/>
<dbReference type="Proteomes" id="UP000002592">
    <property type="component" value="Chromosome"/>
</dbReference>
<dbReference type="GO" id="GO:0005737">
    <property type="term" value="C:cytoplasm"/>
    <property type="evidence" value="ECO:0007669"/>
    <property type="project" value="UniProtKB-ARBA"/>
</dbReference>
<dbReference type="GO" id="GO:0015935">
    <property type="term" value="C:small ribosomal subunit"/>
    <property type="evidence" value="ECO:0007669"/>
    <property type="project" value="InterPro"/>
</dbReference>
<dbReference type="GO" id="GO:0019843">
    <property type="term" value="F:rRNA binding"/>
    <property type="evidence" value="ECO:0007669"/>
    <property type="project" value="UniProtKB-UniRule"/>
</dbReference>
<dbReference type="GO" id="GO:0003735">
    <property type="term" value="F:structural constituent of ribosome"/>
    <property type="evidence" value="ECO:0007669"/>
    <property type="project" value="InterPro"/>
</dbReference>
<dbReference type="GO" id="GO:0000028">
    <property type="term" value="P:ribosomal small subunit assembly"/>
    <property type="evidence" value="ECO:0007669"/>
    <property type="project" value="TreeGrafter"/>
</dbReference>
<dbReference type="GO" id="GO:0006412">
    <property type="term" value="P:translation"/>
    <property type="evidence" value="ECO:0007669"/>
    <property type="project" value="UniProtKB-UniRule"/>
</dbReference>
<dbReference type="FunFam" id="3.30.860.10:FF:000001">
    <property type="entry name" value="30S ribosomal protein S19"/>
    <property type="match status" value="1"/>
</dbReference>
<dbReference type="Gene3D" id="3.30.860.10">
    <property type="entry name" value="30s Ribosomal Protein S19, Chain A"/>
    <property type="match status" value="1"/>
</dbReference>
<dbReference type="HAMAP" id="MF_00531">
    <property type="entry name" value="Ribosomal_uS19"/>
    <property type="match status" value="1"/>
</dbReference>
<dbReference type="InterPro" id="IPR002222">
    <property type="entry name" value="Ribosomal_uS19"/>
</dbReference>
<dbReference type="InterPro" id="IPR005732">
    <property type="entry name" value="Ribosomal_uS19_bac-type"/>
</dbReference>
<dbReference type="InterPro" id="IPR020934">
    <property type="entry name" value="Ribosomal_uS19_CS"/>
</dbReference>
<dbReference type="InterPro" id="IPR023575">
    <property type="entry name" value="Ribosomal_uS19_SF"/>
</dbReference>
<dbReference type="NCBIfam" id="TIGR01050">
    <property type="entry name" value="rpsS_bact"/>
    <property type="match status" value="1"/>
</dbReference>
<dbReference type="PANTHER" id="PTHR11880">
    <property type="entry name" value="RIBOSOMAL PROTEIN S19P FAMILY MEMBER"/>
    <property type="match status" value="1"/>
</dbReference>
<dbReference type="PANTHER" id="PTHR11880:SF8">
    <property type="entry name" value="SMALL RIBOSOMAL SUBUNIT PROTEIN US19M"/>
    <property type="match status" value="1"/>
</dbReference>
<dbReference type="Pfam" id="PF00203">
    <property type="entry name" value="Ribosomal_S19"/>
    <property type="match status" value="1"/>
</dbReference>
<dbReference type="PIRSF" id="PIRSF002144">
    <property type="entry name" value="Ribosomal_S19"/>
    <property type="match status" value="1"/>
</dbReference>
<dbReference type="PRINTS" id="PR00975">
    <property type="entry name" value="RIBOSOMALS19"/>
</dbReference>
<dbReference type="SUPFAM" id="SSF54570">
    <property type="entry name" value="Ribosomal protein S19"/>
    <property type="match status" value="1"/>
</dbReference>
<dbReference type="PROSITE" id="PS00323">
    <property type="entry name" value="RIBOSOMAL_S19"/>
    <property type="match status" value="1"/>
</dbReference>
<sequence>MGRSLKKGPFISDSLLRKIEKQNSNDDKAVIKTWSRASTILPLMIGHTIAVHNGKSHIPVFITEQMVGHKLGEFAPTRTYRGHIRDKKGAR</sequence>
<protein>
    <recommendedName>
        <fullName evidence="1">Small ribosomal subunit protein uS19</fullName>
    </recommendedName>
    <alternativeName>
        <fullName evidence="2">30S ribosomal protein S19</fullName>
    </alternativeName>
</protein>
<name>RS19_PROM1</name>
<feature type="chain" id="PRO_1000051098" description="Small ribosomal subunit protein uS19">
    <location>
        <begin position="1"/>
        <end position="91"/>
    </location>
</feature>
<proteinExistence type="inferred from homology"/>
<accession>A2C4Z5</accession>
<keyword id="KW-0687">Ribonucleoprotein</keyword>
<keyword id="KW-0689">Ribosomal protein</keyword>
<keyword id="KW-0694">RNA-binding</keyword>
<keyword id="KW-0699">rRNA-binding</keyword>
<reference key="1">
    <citation type="journal article" date="2007" name="PLoS Genet.">
        <title>Patterns and implications of gene gain and loss in the evolution of Prochlorococcus.</title>
        <authorList>
            <person name="Kettler G.C."/>
            <person name="Martiny A.C."/>
            <person name="Huang K."/>
            <person name="Zucker J."/>
            <person name="Coleman M.L."/>
            <person name="Rodrigue S."/>
            <person name="Chen F."/>
            <person name="Lapidus A."/>
            <person name="Ferriera S."/>
            <person name="Johnson J."/>
            <person name="Steglich C."/>
            <person name="Church G.M."/>
            <person name="Richardson P."/>
            <person name="Chisholm S.W."/>
        </authorList>
    </citation>
    <scope>NUCLEOTIDE SEQUENCE [LARGE SCALE GENOMIC DNA]</scope>
    <source>
        <strain>NATL1A</strain>
    </source>
</reference>
<comment type="function">
    <text evidence="1">Protein S19 forms a complex with S13 that binds strongly to the 16S ribosomal RNA.</text>
</comment>
<comment type="similarity">
    <text evidence="1">Belongs to the universal ribosomal protein uS19 family.</text>
</comment>